<organism>
    <name type="scientific">Bos taurus</name>
    <name type="common">Bovine</name>
    <dbReference type="NCBI Taxonomy" id="9913"/>
    <lineage>
        <taxon>Eukaryota</taxon>
        <taxon>Metazoa</taxon>
        <taxon>Chordata</taxon>
        <taxon>Craniata</taxon>
        <taxon>Vertebrata</taxon>
        <taxon>Euteleostomi</taxon>
        <taxon>Mammalia</taxon>
        <taxon>Eutheria</taxon>
        <taxon>Laurasiatheria</taxon>
        <taxon>Artiodactyla</taxon>
        <taxon>Ruminantia</taxon>
        <taxon>Pecora</taxon>
        <taxon>Bovidae</taxon>
        <taxon>Bovinae</taxon>
        <taxon>Bos</taxon>
    </lineage>
</organism>
<reference key="1">
    <citation type="submission" date="2006-08" db="EMBL/GenBank/DDBJ databases">
        <authorList>
            <consortium name="NIH - Mammalian Gene Collection (MGC) project"/>
        </authorList>
    </citation>
    <scope>NUCLEOTIDE SEQUENCE [LARGE SCALE MRNA]</scope>
    <source>
        <strain>Hereford</strain>
        <tissue>Thalamus</tissue>
    </source>
</reference>
<proteinExistence type="evidence at transcript level"/>
<feature type="chain" id="PRO_0000264629" description="L-serine dehydratase/L-threonine deaminase">
    <location>
        <begin position="1"/>
        <end position="327"/>
    </location>
</feature>
<feature type="modified residue" description="N6-(pyridoxal phosphate)lysine" evidence="2">
    <location>
        <position position="41"/>
    </location>
</feature>
<gene>
    <name type="primary">SDS</name>
    <name type="synonym">SDH</name>
</gene>
<name>SDHL_BOVIN</name>
<accession>Q0VCW4</accession>
<protein>
    <recommendedName>
        <fullName>L-serine dehydratase/L-threonine deaminase</fullName>
        <shortName>SDH</shortName>
        <ecNumber evidence="2">4.3.1.17</ecNumber>
    </recommendedName>
    <alternativeName>
        <fullName>L-serine deaminase</fullName>
    </alternativeName>
    <alternativeName>
        <fullName>L-threonine dehydratase</fullName>
        <shortName>TDH</shortName>
        <ecNumber evidence="2">4.3.1.19</ecNumber>
    </alternativeName>
</protein>
<keyword id="KW-0963">Cytoplasm</keyword>
<keyword id="KW-0312">Gluconeogenesis</keyword>
<keyword id="KW-0443">Lipid metabolism</keyword>
<keyword id="KW-0456">Lyase</keyword>
<keyword id="KW-0663">Pyridoxal phosphate</keyword>
<keyword id="KW-1185">Reference proteome</keyword>
<comment type="function">
    <text evidence="2">Catalyzes the pyridoxal-phosphate-dependent dehydrative deamination of L-threonine and L-serine to ammonia and alpha-ketobutyrate and pyruvate, respectively.</text>
</comment>
<comment type="catalytic activity">
    <reaction evidence="2">
        <text>L-serine = pyruvate + NH4(+)</text>
        <dbReference type="Rhea" id="RHEA:19169"/>
        <dbReference type="ChEBI" id="CHEBI:15361"/>
        <dbReference type="ChEBI" id="CHEBI:28938"/>
        <dbReference type="ChEBI" id="CHEBI:33384"/>
        <dbReference type="EC" id="4.3.1.17"/>
    </reaction>
</comment>
<comment type="catalytic activity">
    <reaction evidence="2">
        <text>L-threonine = 2-oxobutanoate + NH4(+)</text>
        <dbReference type="Rhea" id="RHEA:22108"/>
        <dbReference type="ChEBI" id="CHEBI:16763"/>
        <dbReference type="ChEBI" id="CHEBI:28938"/>
        <dbReference type="ChEBI" id="CHEBI:57926"/>
        <dbReference type="EC" id="4.3.1.19"/>
    </reaction>
</comment>
<comment type="cofactor">
    <cofactor evidence="2">
        <name>pyridoxal 5'-phosphate</name>
        <dbReference type="ChEBI" id="CHEBI:597326"/>
    </cofactor>
</comment>
<comment type="pathway">
    <text>Carbohydrate biosynthesis; gluconeogenesis.</text>
</comment>
<comment type="subunit">
    <text evidence="2">Homodimer.</text>
</comment>
<comment type="subcellular location">
    <subcellularLocation>
        <location evidence="1">Cytoplasm</location>
    </subcellularLocation>
</comment>
<comment type="similarity">
    <text evidence="3">Belongs to the serine/threonine dehydratase family.</text>
</comment>
<evidence type="ECO:0000250" key="1">
    <source>
        <dbReference type="UniProtKB" id="P09367"/>
    </source>
</evidence>
<evidence type="ECO:0000250" key="2">
    <source>
        <dbReference type="UniProtKB" id="P20132"/>
    </source>
</evidence>
<evidence type="ECO:0000305" key="3"/>
<dbReference type="EC" id="4.3.1.17" evidence="2"/>
<dbReference type="EC" id="4.3.1.19" evidence="2"/>
<dbReference type="EMBL" id="BC119966">
    <property type="protein sequence ID" value="AAI19967.1"/>
    <property type="molecule type" value="mRNA"/>
</dbReference>
<dbReference type="RefSeq" id="NP_001069130.1">
    <property type="nucleotide sequence ID" value="NM_001075662.1"/>
</dbReference>
<dbReference type="SMR" id="Q0VCW4"/>
<dbReference type="FunCoup" id="Q0VCW4">
    <property type="interactions" value="197"/>
</dbReference>
<dbReference type="STRING" id="9913.ENSBTAP00000042524"/>
<dbReference type="PaxDb" id="9913-ENSBTAP00000042524"/>
<dbReference type="PeptideAtlas" id="Q0VCW4"/>
<dbReference type="GeneID" id="514346"/>
<dbReference type="KEGG" id="bta:514346"/>
<dbReference type="CTD" id="10993"/>
<dbReference type="eggNOG" id="KOG1250">
    <property type="taxonomic scope" value="Eukaryota"/>
</dbReference>
<dbReference type="InParanoid" id="Q0VCW4"/>
<dbReference type="OrthoDB" id="7773036at2759"/>
<dbReference type="UniPathway" id="UPA00138"/>
<dbReference type="Proteomes" id="UP000009136">
    <property type="component" value="Unplaced"/>
</dbReference>
<dbReference type="GO" id="GO:0005737">
    <property type="term" value="C:cytoplasm"/>
    <property type="evidence" value="ECO:0007669"/>
    <property type="project" value="UniProtKB-SubCell"/>
</dbReference>
<dbReference type="GO" id="GO:0003941">
    <property type="term" value="F:L-serine ammonia-lyase activity"/>
    <property type="evidence" value="ECO:0000250"/>
    <property type="project" value="UniProtKB"/>
</dbReference>
<dbReference type="GO" id="GO:0042803">
    <property type="term" value="F:protein homodimerization activity"/>
    <property type="evidence" value="ECO:0000250"/>
    <property type="project" value="UniProtKB"/>
</dbReference>
<dbReference type="GO" id="GO:0030170">
    <property type="term" value="F:pyridoxal phosphate binding"/>
    <property type="evidence" value="ECO:0000250"/>
    <property type="project" value="UniProtKB"/>
</dbReference>
<dbReference type="GO" id="GO:0004794">
    <property type="term" value="F:threonine deaminase activity"/>
    <property type="evidence" value="ECO:0000250"/>
    <property type="project" value="UniProtKB"/>
</dbReference>
<dbReference type="GO" id="GO:0006094">
    <property type="term" value="P:gluconeogenesis"/>
    <property type="evidence" value="ECO:0007669"/>
    <property type="project" value="UniProtKB-UniPathway"/>
</dbReference>
<dbReference type="GO" id="GO:0006565">
    <property type="term" value="P:L-serine catabolic process"/>
    <property type="evidence" value="ECO:0000250"/>
    <property type="project" value="UniProtKB"/>
</dbReference>
<dbReference type="GO" id="GO:0006629">
    <property type="term" value="P:lipid metabolic process"/>
    <property type="evidence" value="ECO:0007669"/>
    <property type="project" value="UniProtKB-KW"/>
</dbReference>
<dbReference type="GO" id="GO:0042866">
    <property type="term" value="P:pyruvate biosynthetic process"/>
    <property type="evidence" value="ECO:0000250"/>
    <property type="project" value="UniProtKB"/>
</dbReference>
<dbReference type="CDD" id="cd06448">
    <property type="entry name" value="L-Ser-dehyd"/>
    <property type="match status" value="1"/>
</dbReference>
<dbReference type="FunFam" id="3.40.50.1100:FF:000031">
    <property type="entry name" value="L-serine dehydratase/L-threonine deaminase"/>
    <property type="match status" value="1"/>
</dbReference>
<dbReference type="FunFam" id="3.40.50.1100:FF:000135">
    <property type="entry name" value="L-serine dehydratase/L-threonine deaminase"/>
    <property type="match status" value="1"/>
</dbReference>
<dbReference type="Gene3D" id="3.40.50.1100">
    <property type="match status" value="2"/>
</dbReference>
<dbReference type="InterPro" id="IPR050147">
    <property type="entry name" value="Ser/Thr_Dehydratase"/>
</dbReference>
<dbReference type="InterPro" id="IPR000634">
    <property type="entry name" value="Ser/Thr_deHydtase_PyrdxlP-BS"/>
</dbReference>
<dbReference type="InterPro" id="IPR001926">
    <property type="entry name" value="TrpB-like_PALP"/>
</dbReference>
<dbReference type="InterPro" id="IPR036052">
    <property type="entry name" value="TrpB-like_PALP_sf"/>
</dbReference>
<dbReference type="PANTHER" id="PTHR48078:SF8">
    <property type="entry name" value="L-SERINE DEHYDRATASE_L-THREONINE DEAMINASE"/>
    <property type="match status" value="1"/>
</dbReference>
<dbReference type="PANTHER" id="PTHR48078">
    <property type="entry name" value="THREONINE DEHYDRATASE, MITOCHONDRIAL-RELATED"/>
    <property type="match status" value="1"/>
</dbReference>
<dbReference type="Pfam" id="PF00291">
    <property type="entry name" value="PALP"/>
    <property type="match status" value="1"/>
</dbReference>
<dbReference type="SUPFAM" id="SSF53686">
    <property type="entry name" value="Tryptophan synthase beta subunit-like PLP-dependent enzymes"/>
    <property type="match status" value="1"/>
</dbReference>
<dbReference type="PROSITE" id="PS00165">
    <property type="entry name" value="DEHYDRATASE_SER_THR"/>
    <property type="match status" value="1"/>
</dbReference>
<sequence>MMSGRPLHMETPVRDSMTLSKVAGTTAYLKLDSAQPSGSFKIRGIGHLCKMWAERGCEHFVCSSAGNAGMAAAYAARKLGIPSTIVVPSTTPALTIQRLKNEGATVKVVGETLDEAIRVAKDLEKNNSGWVYVPPFDDPLIWEGHSSIVKELKETMTEKPGAIVLAVGGGGLLCGVVQGLAEVGWRDVPVITMETIGAESFHASTKAGKLVTLPCITSVAKALGVTTVAAQAMKVYREHPIFSEVVSDQEAVAALEKFVDDEKILVEPACGAALAAVYSNVIQKLQGEGKLRTPLSSLVVIVCGGSNISLAQLVALKKQLGMDGLSQ</sequence>